<organism>
    <name type="scientific">Pisaster ochraceus</name>
    <name type="common">Ochre sea star</name>
    <name type="synonym">Asterias ochracea</name>
    <dbReference type="NCBI Taxonomy" id="7612"/>
    <lineage>
        <taxon>Eukaryota</taxon>
        <taxon>Metazoa</taxon>
        <taxon>Echinodermata</taxon>
        <taxon>Eleutherozoa</taxon>
        <taxon>Asterozoa</taxon>
        <taxon>Asteroidea</taxon>
        <taxon>Forcipulatacea</taxon>
        <taxon>Forcipulatida</taxon>
        <taxon>Asteriidae</taxon>
        <taxon>Pisaster</taxon>
    </lineage>
</organism>
<geneLocation type="mitochondrion"/>
<proteinExistence type="inferred from homology"/>
<gene>
    <name type="primary">ND3</name>
</gene>
<comment type="function">
    <text evidence="1">Core subunit of the mitochondrial membrane respiratory chain NADH dehydrogenase (Complex I) that is believed to belong to the minimal assembly required for catalysis. Complex I functions in the transfer of electrons from NADH to the respiratory chain. The immediate electron acceptor for the enzyme is believed to be ubiquinone (By similarity).</text>
</comment>
<comment type="catalytic activity">
    <reaction>
        <text>a ubiquinone + NADH + 5 H(+)(in) = a ubiquinol + NAD(+) + 4 H(+)(out)</text>
        <dbReference type="Rhea" id="RHEA:29091"/>
        <dbReference type="Rhea" id="RHEA-COMP:9565"/>
        <dbReference type="Rhea" id="RHEA-COMP:9566"/>
        <dbReference type="ChEBI" id="CHEBI:15378"/>
        <dbReference type="ChEBI" id="CHEBI:16389"/>
        <dbReference type="ChEBI" id="CHEBI:17976"/>
        <dbReference type="ChEBI" id="CHEBI:57540"/>
        <dbReference type="ChEBI" id="CHEBI:57945"/>
        <dbReference type="EC" id="7.1.1.2"/>
    </reaction>
</comment>
<comment type="subcellular location">
    <subcellularLocation>
        <location evidence="1">Mitochondrion membrane</location>
        <topology evidence="1">Multi-pass membrane protein</topology>
    </subcellularLocation>
</comment>
<comment type="similarity">
    <text evidence="3">Belongs to the complex I subunit 3 family.</text>
</comment>
<keyword id="KW-0249">Electron transport</keyword>
<keyword id="KW-0472">Membrane</keyword>
<keyword id="KW-0496">Mitochondrion</keyword>
<keyword id="KW-0520">NAD</keyword>
<keyword id="KW-0679">Respiratory chain</keyword>
<keyword id="KW-1278">Translocase</keyword>
<keyword id="KW-0812">Transmembrane</keyword>
<keyword id="KW-1133">Transmembrane helix</keyword>
<keyword id="KW-0813">Transport</keyword>
<keyword id="KW-0830">Ubiquinone</keyword>
<reference key="1">
    <citation type="journal article" date="1990" name="J. Mol. Evol.">
        <title>Nucleotide sequence of nine protein-coding genes and 22 tRNAs in the mitochondrial DNA of the sea star Pisaster ochraceus.</title>
        <authorList>
            <person name="Smith M.J."/>
            <person name="Banfield D.K."/>
            <person name="Doteval K."/>
            <person name="Gorski S."/>
            <person name="Kowbel D.J."/>
        </authorList>
    </citation>
    <scope>NUCLEOTIDE SEQUENCE [GENOMIC DNA]</scope>
</reference>
<dbReference type="EC" id="7.1.1.2"/>
<dbReference type="EMBL" id="X55514">
    <property type="protein sequence ID" value="CAA39130.1"/>
    <property type="molecule type" value="Genomic_DNA"/>
</dbReference>
<dbReference type="PIR" id="S14211">
    <property type="entry name" value="S14211"/>
</dbReference>
<dbReference type="SMR" id="P24997"/>
<dbReference type="GO" id="GO:0031966">
    <property type="term" value="C:mitochondrial membrane"/>
    <property type="evidence" value="ECO:0007669"/>
    <property type="project" value="UniProtKB-SubCell"/>
</dbReference>
<dbReference type="GO" id="GO:0030964">
    <property type="term" value="C:NADH dehydrogenase complex"/>
    <property type="evidence" value="ECO:0007669"/>
    <property type="project" value="TreeGrafter"/>
</dbReference>
<dbReference type="GO" id="GO:0008137">
    <property type="term" value="F:NADH dehydrogenase (ubiquinone) activity"/>
    <property type="evidence" value="ECO:0007669"/>
    <property type="project" value="UniProtKB-EC"/>
</dbReference>
<dbReference type="FunFam" id="1.20.58.1610:FF:000004">
    <property type="entry name" value="NADH-quinone oxidoreductase subunit A"/>
    <property type="match status" value="1"/>
</dbReference>
<dbReference type="Gene3D" id="1.20.58.1610">
    <property type="entry name" value="NADH:ubiquinone/plastoquinone oxidoreductase, chain 3"/>
    <property type="match status" value="1"/>
</dbReference>
<dbReference type="InterPro" id="IPR000440">
    <property type="entry name" value="NADH_UbQ/plastoQ_OxRdtase_su3"/>
</dbReference>
<dbReference type="InterPro" id="IPR038430">
    <property type="entry name" value="NDAH_ubi_oxred_su3_sf"/>
</dbReference>
<dbReference type="PANTHER" id="PTHR11058">
    <property type="entry name" value="NADH-UBIQUINONE OXIDOREDUCTASE CHAIN 3"/>
    <property type="match status" value="1"/>
</dbReference>
<dbReference type="PANTHER" id="PTHR11058:SF9">
    <property type="entry name" value="NADH-UBIQUINONE OXIDOREDUCTASE CHAIN 3"/>
    <property type="match status" value="1"/>
</dbReference>
<dbReference type="Pfam" id="PF00507">
    <property type="entry name" value="Oxidored_q4"/>
    <property type="match status" value="1"/>
</dbReference>
<evidence type="ECO:0000250" key="1"/>
<evidence type="ECO:0000255" key="2"/>
<evidence type="ECO:0000305" key="3"/>
<sequence length="116" mass="13088">MYNIIIIVLSILAVTAALVFAAHFLPSRKLDLENGSPYECGFDPLNSARVPFSFRFFLVAILFLLFDLEIALLFPFPQALFIFNSSHVLYIATLFLAILLIGLIFEWTQGGLDWAE</sequence>
<feature type="chain" id="PRO_0000117807" description="NADH-ubiquinone oxidoreductase chain 3">
    <location>
        <begin position="1"/>
        <end position="116"/>
    </location>
</feature>
<feature type="transmembrane region" description="Helical" evidence="2">
    <location>
        <begin position="4"/>
        <end position="24"/>
    </location>
</feature>
<feature type="transmembrane region" description="Helical" evidence="2">
    <location>
        <begin position="56"/>
        <end position="76"/>
    </location>
</feature>
<feature type="transmembrane region" description="Helical" evidence="2">
    <location>
        <begin position="88"/>
        <end position="108"/>
    </location>
</feature>
<accession>P24997</accession>
<name>NU3M_PISOC</name>
<protein>
    <recommendedName>
        <fullName>NADH-ubiquinone oxidoreductase chain 3</fullName>
        <ecNumber>7.1.1.2</ecNumber>
    </recommendedName>
    <alternativeName>
        <fullName>NADH dehydrogenase subunit 3</fullName>
    </alternativeName>
</protein>